<protein>
    <recommendedName>
        <fullName evidence="1">Large ribosomal subunit protein bL34</fullName>
    </recommendedName>
    <alternativeName>
        <fullName evidence="2">50S ribosomal protein L34</fullName>
    </alternativeName>
</protein>
<gene>
    <name evidence="1" type="primary">rpmH</name>
    <name type="ordered locus">NT01EI_3935</name>
</gene>
<dbReference type="EMBL" id="CP001600">
    <property type="protein sequence ID" value="ACR71046.1"/>
    <property type="molecule type" value="Genomic_DNA"/>
</dbReference>
<dbReference type="RefSeq" id="WP_015462599.1">
    <property type="nucleotide sequence ID" value="NZ_CP169062.1"/>
</dbReference>
<dbReference type="SMR" id="C5BF63"/>
<dbReference type="STRING" id="67780.B6E78_11190"/>
<dbReference type="GeneID" id="72530328"/>
<dbReference type="KEGG" id="eic:NT01EI_3935"/>
<dbReference type="HOGENOM" id="CLU_129938_2_1_6"/>
<dbReference type="OrthoDB" id="9804164at2"/>
<dbReference type="Proteomes" id="UP000001485">
    <property type="component" value="Chromosome"/>
</dbReference>
<dbReference type="GO" id="GO:1990904">
    <property type="term" value="C:ribonucleoprotein complex"/>
    <property type="evidence" value="ECO:0007669"/>
    <property type="project" value="UniProtKB-KW"/>
</dbReference>
<dbReference type="GO" id="GO:0005840">
    <property type="term" value="C:ribosome"/>
    <property type="evidence" value="ECO:0007669"/>
    <property type="project" value="UniProtKB-KW"/>
</dbReference>
<dbReference type="GO" id="GO:0003735">
    <property type="term" value="F:structural constituent of ribosome"/>
    <property type="evidence" value="ECO:0007669"/>
    <property type="project" value="InterPro"/>
</dbReference>
<dbReference type="GO" id="GO:0006412">
    <property type="term" value="P:translation"/>
    <property type="evidence" value="ECO:0007669"/>
    <property type="project" value="UniProtKB-UniRule"/>
</dbReference>
<dbReference type="FunFam" id="1.10.287.3980:FF:000001">
    <property type="entry name" value="Mitochondrial ribosomal protein L34"/>
    <property type="match status" value="1"/>
</dbReference>
<dbReference type="Gene3D" id="1.10.287.3980">
    <property type="match status" value="1"/>
</dbReference>
<dbReference type="HAMAP" id="MF_00391">
    <property type="entry name" value="Ribosomal_bL34"/>
    <property type="match status" value="1"/>
</dbReference>
<dbReference type="InterPro" id="IPR000271">
    <property type="entry name" value="Ribosomal_bL34"/>
</dbReference>
<dbReference type="InterPro" id="IPR020939">
    <property type="entry name" value="Ribosomal_bL34_CS"/>
</dbReference>
<dbReference type="NCBIfam" id="TIGR01030">
    <property type="entry name" value="rpmH_bact"/>
    <property type="match status" value="1"/>
</dbReference>
<dbReference type="PANTHER" id="PTHR14503:SF4">
    <property type="entry name" value="LARGE RIBOSOMAL SUBUNIT PROTEIN BL34M"/>
    <property type="match status" value="1"/>
</dbReference>
<dbReference type="PANTHER" id="PTHR14503">
    <property type="entry name" value="MITOCHONDRIAL RIBOSOMAL PROTEIN 34 FAMILY MEMBER"/>
    <property type="match status" value="1"/>
</dbReference>
<dbReference type="Pfam" id="PF00468">
    <property type="entry name" value="Ribosomal_L34"/>
    <property type="match status" value="1"/>
</dbReference>
<dbReference type="PROSITE" id="PS00784">
    <property type="entry name" value="RIBOSOMAL_L34"/>
    <property type="match status" value="1"/>
</dbReference>
<name>RL34_EDWI9</name>
<accession>C5BF63</accession>
<feature type="chain" id="PRO_1000205825" description="Large ribosomal subunit protein bL34">
    <location>
        <begin position="1"/>
        <end position="46"/>
    </location>
</feature>
<comment type="similarity">
    <text evidence="1">Belongs to the bacterial ribosomal protein bL34 family.</text>
</comment>
<evidence type="ECO:0000255" key="1">
    <source>
        <dbReference type="HAMAP-Rule" id="MF_00391"/>
    </source>
</evidence>
<evidence type="ECO:0000305" key="2"/>
<keyword id="KW-0687">Ribonucleoprotein</keyword>
<keyword id="KW-0689">Ribosomal protein</keyword>
<proteinExistence type="inferred from homology"/>
<reference key="1">
    <citation type="submission" date="2009-03" db="EMBL/GenBank/DDBJ databases">
        <title>Complete genome sequence of Edwardsiella ictaluri 93-146.</title>
        <authorList>
            <person name="Williams M.L."/>
            <person name="Gillaspy A.F."/>
            <person name="Dyer D.W."/>
            <person name="Thune R.L."/>
            <person name="Waldbieser G.C."/>
            <person name="Schuster S.C."/>
            <person name="Gipson J."/>
            <person name="Zaitshik J."/>
            <person name="Landry C."/>
            <person name="Lawrence M.L."/>
        </authorList>
    </citation>
    <scope>NUCLEOTIDE SEQUENCE [LARGE SCALE GENOMIC DNA]</scope>
    <source>
        <strain>93-146</strain>
    </source>
</reference>
<organism>
    <name type="scientific">Edwardsiella ictaluri (strain 93-146)</name>
    <dbReference type="NCBI Taxonomy" id="634503"/>
    <lineage>
        <taxon>Bacteria</taxon>
        <taxon>Pseudomonadati</taxon>
        <taxon>Pseudomonadota</taxon>
        <taxon>Gammaproteobacteria</taxon>
        <taxon>Enterobacterales</taxon>
        <taxon>Hafniaceae</taxon>
        <taxon>Edwardsiella</taxon>
    </lineage>
</organism>
<sequence length="46" mass="5320">MKRTFQPSVLKRNRTHGFRARMANKNGRQVLARRRAKGRARLTVAG</sequence>